<keyword id="KW-0002">3D-structure</keyword>
<keyword id="KW-0963">Cytoplasm</keyword>
<keyword id="KW-0378">Hydrolase</keyword>
<keyword id="KW-0452">Lithium</keyword>
<keyword id="KW-0460">Magnesium</keyword>
<keyword id="KW-0479">Metal-binding</keyword>
<keyword id="KW-1185">Reference proteome</keyword>
<dbReference type="EC" id="3.1.3.25" evidence="1"/>
<dbReference type="EC" id="3.1.3.94" evidence="1"/>
<dbReference type="EMBL" id="AF042730">
    <property type="protein sequence ID" value="AAB97469.1"/>
    <property type="molecule type" value="mRNA"/>
</dbReference>
<dbReference type="CCDS" id="CCDS17240.1"/>
<dbReference type="PDB" id="4AS5">
    <property type="method" value="X-ray"/>
    <property type="resolution" value="2.43 A"/>
    <property type="chains" value="A/B/C/D=1-277"/>
</dbReference>
<dbReference type="PDBsum" id="4AS5"/>
<dbReference type="SMR" id="O55023"/>
<dbReference type="FunCoup" id="O55023">
    <property type="interactions" value="1058"/>
</dbReference>
<dbReference type="IntAct" id="O55023">
    <property type="interactions" value="2"/>
</dbReference>
<dbReference type="STRING" id="10090.ENSMUSP00000068174"/>
<dbReference type="GlyGen" id="O55023">
    <property type="glycosylation" value="1 site, 1 O-linked glycan (1 site)"/>
</dbReference>
<dbReference type="iPTMnet" id="O55023"/>
<dbReference type="PhosphoSitePlus" id="O55023"/>
<dbReference type="SwissPalm" id="O55023"/>
<dbReference type="jPOST" id="O55023"/>
<dbReference type="PaxDb" id="10090-ENSMUSP00000068174"/>
<dbReference type="PeptideAtlas" id="O55023"/>
<dbReference type="ProteomicsDB" id="269480"/>
<dbReference type="Pumba" id="O55023"/>
<dbReference type="AGR" id="MGI:1933158"/>
<dbReference type="MGI" id="MGI:1933158">
    <property type="gene designation" value="Impa1"/>
</dbReference>
<dbReference type="eggNOG" id="KOG2951">
    <property type="taxonomic scope" value="Eukaryota"/>
</dbReference>
<dbReference type="InParanoid" id="O55023"/>
<dbReference type="PhylomeDB" id="O55023"/>
<dbReference type="BRENDA" id="3.1.3.25">
    <property type="organism ID" value="3474"/>
</dbReference>
<dbReference type="Reactome" id="R-MMU-1855183">
    <property type="pathway name" value="Synthesis of IP2, IP, and Ins in the cytosol"/>
</dbReference>
<dbReference type="UniPathway" id="UPA00823">
    <property type="reaction ID" value="UER00788"/>
</dbReference>
<dbReference type="ChiTaRS" id="Impa1">
    <property type="organism name" value="mouse"/>
</dbReference>
<dbReference type="EvolutionaryTrace" id="O55023"/>
<dbReference type="PRO" id="PR:O55023"/>
<dbReference type="Proteomes" id="UP000000589">
    <property type="component" value="Unplaced"/>
</dbReference>
<dbReference type="RNAct" id="O55023">
    <property type="molecule type" value="protein"/>
</dbReference>
<dbReference type="GO" id="GO:0005737">
    <property type="term" value="C:cytoplasm"/>
    <property type="evidence" value="ECO:0000266"/>
    <property type="project" value="MGI"/>
</dbReference>
<dbReference type="GO" id="GO:0103026">
    <property type="term" value="F:fructose-1-phosphatase activity"/>
    <property type="evidence" value="ECO:0007669"/>
    <property type="project" value="RHEA"/>
</dbReference>
<dbReference type="GO" id="GO:0008877">
    <property type="term" value="F:glucose-1-phosphatase activity"/>
    <property type="evidence" value="ECO:0007669"/>
    <property type="project" value="RHEA"/>
</dbReference>
<dbReference type="GO" id="GO:0004346">
    <property type="term" value="F:glucose-6-phosphatase activity"/>
    <property type="evidence" value="ECO:0007669"/>
    <property type="project" value="RHEA"/>
</dbReference>
<dbReference type="GO" id="GO:0047954">
    <property type="term" value="F:glycerol-2-phosphatase activity"/>
    <property type="evidence" value="ECO:0007669"/>
    <property type="project" value="RHEA"/>
</dbReference>
<dbReference type="GO" id="GO:0008934">
    <property type="term" value="F:inositol monophosphate 1-phosphatase activity"/>
    <property type="evidence" value="ECO:0000266"/>
    <property type="project" value="MGI"/>
</dbReference>
<dbReference type="GO" id="GO:0052832">
    <property type="term" value="F:inositol monophosphate 3-phosphatase activity"/>
    <property type="evidence" value="ECO:0007669"/>
    <property type="project" value="RHEA"/>
</dbReference>
<dbReference type="GO" id="GO:0052833">
    <property type="term" value="F:inositol monophosphate 4-phosphatase activity"/>
    <property type="evidence" value="ECO:0007669"/>
    <property type="project" value="RHEA"/>
</dbReference>
<dbReference type="GO" id="GO:0052834">
    <property type="term" value="F:inositol monophosphate phosphatase activity"/>
    <property type="evidence" value="ECO:0000250"/>
    <property type="project" value="UniProtKB"/>
</dbReference>
<dbReference type="GO" id="GO:0031403">
    <property type="term" value="F:lithium ion binding"/>
    <property type="evidence" value="ECO:0000250"/>
    <property type="project" value="UniProtKB"/>
</dbReference>
<dbReference type="GO" id="GO:0000287">
    <property type="term" value="F:magnesium ion binding"/>
    <property type="evidence" value="ECO:0000314"/>
    <property type="project" value="UniProtKB"/>
</dbReference>
<dbReference type="GO" id="GO:0030145">
    <property type="term" value="F:manganese ion binding"/>
    <property type="evidence" value="ECO:0000250"/>
    <property type="project" value="UniProtKB"/>
</dbReference>
<dbReference type="GO" id="GO:0042803">
    <property type="term" value="F:protein homodimerization activity"/>
    <property type="evidence" value="ECO:0000266"/>
    <property type="project" value="MGI"/>
</dbReference>
<dbReference type="GO" id="GO:0006021">
    <property type="term" value="P:inositol biosynthetic process"/>
    <property type="evidence" value="ECO:0007669"/>
    <property type="project" value="UniProtKB-UniPathway"/>
</dbReference>
<dbReference type="GO" id="GO:0006020">
    <property type="term" value="P:inositol metabolic process"/>
    <property type="evidence" value="ECO:0000304"/>
    <property type="project" value="MGI"/>
</dbReference>
<dbReference type="GO" id="GO:0046854">
    <property type="term" value="P:phosphatidylinositol phosphate biosynthetic process"/>
    <property type="evidence" value="ECO:0007669"/>
    <property type="project" value="InterPro"/>
</dbReference>
<dbReference type="CDD" id="cd01639">
    <property type="entry name" value="IMPase"/>
    <property type="match status" value="1"/>
</dbReference>
<dbReference type="FunFam" id="3.30.540.10:FF:000004">
    <property type="entry name" value="Inositol-1-monophosphatase"/>
    <property type="match status" value="1"/>
</dbReference>
<dbReference type="FunFam" id="3.40.190.80:FF:000002">
    <property type="entry name" value="Inositol-1-monophosphatase"/>
    <property type="match status" value="1"/>
</dbReference>
<dbReference type="Gene3D" id="3.40.190.80">
    <property type="match status" value="1"/>
</dbReference>
<dbReference type="Gene3D" id="3.30.540.10">
    <property type="entry name" value="Fructose-1,6-Bisphosphatase, subunit A, domain 1"/>
    <property type="match status" value="1"/>
</dbReference>
<dbReference type="InterPro" id="IPR033942">
    <property type="entry name" value="IMPase"/>
</dbReference>
<dbReference type="InterPro" id="IPR020583">
    <property type="entry name" value="Inositol_monoP_metal-BS"/>
</dbReference>
<dbReference type="InterPro" id="IPR020552">
    <property type="entry name" value="Inositol_monoPase_Li-sen"/>
</dbReference>
<dbReference type="InterPro" id="IPR000760">
    <property type="entry name" value="Inositol_monophosphatase-like"/>
</dbReference>
<dbReference type="InterPro" id="IPR020550">
    <property type="entry name" value="Inositol_monophosphatase_CS"/>
</dbReference>
<dbReference type="PANTHER" id="PTHR20854">
    <property type="entry name" value="INOSITOL MONOPHOSPHATASE"/>
    <property type="match status" value="1"/>
</dbReference>
<dbReference type="PANTHER" id="PTHR20854:SF26">
    <property type="entry name" value="INOSITOL MONOPHOSPHATASE 1"/>
    <property type="match status" value="1"/>
</dbReference>
<dbReference type="Pfam" id="PF00459">
    <property type="entry name" value="Inositol_P"/>
    <property type="match status" value="1"/>
</dbReference>
<dbReference type="PRINTS" id="PR00377">
    <property type="entry name" value="IMPHPHTASES"/>
</dbReference>
<dbReference type="PRINTS" id="PR00378">
    <property type="entry name" value="LIIMPHPHTASE"/>
</dbReference>
<dbReference type="SUPFAM" id="SSF56655">
    <property type="entry name" value="Carbohydrate phosphatase"/>
    <property type="match status" value="1"/>
</dbReference>
<dbReference type="PROSITE" id="PS00629">
    <property type="entry name" value="IMP_1"/>
    <property type="match status" value="1"/>
</dbReference>
<dbReference type="PROSITE" id="PS00630">
    <property type="entry name" value="IMP_2"/>
    <property type="match status" value="1"/>
</dbReference>
<comment type="function">
    <text evidence="1">Phosphatase involved in the dephosphorylation of myo-inositol monophosphate to generate myo-inositol. Is also able to dephosphorylate scyllo-inositol-phosphate, myo-inositol 1,4-diphosphate, scyllo-inositol-1,3-diphosphate and scyllo-inositol-1,4-diphosphate. Also dephosphorylates in vitro other sugar-phosphates including D-galactose-1-phosphate, glucose-1-phosphate, glucose-6-phosphate, fructose-1-phosphate, beta-glycerophosphate and 2'-AMP. Responsible for the provision of inositol required for synthesis of phosphatidylinositol and polyphosphoinositides, and involved in maintaining normal brain function. Has been implicated as the pharmacological target for lithium Li(+) action in brain.</text>
</comment>
<comment type="catalytic activity">
    <reaction evidence="1">
        <text>a myo-inositol phosphate + H2O = myo-inositol + phosphate</text>
        <dbReference type="Rhea" id="RHEA:24056"/>
        <dbReference type="ChEBI" id="CHEBI:15377"/>
        <dbReference type="ChEBI" id="CHEBI:17268"/>
        <dbReference type="ChEBI" id="CHEBI:43474"/>
        <dbReference type="ChEBI" id="CHEBI:84139"/>
        <dbReference type="EC" id="3.1.3.25"/>
    </reaction>
    <physiologicalReaction direction="left-to-right" evidence="1">
        <dbReference type="Rhea" id="RHEA:24057"/>
    </physiologicalReaction>
</comment>
<comment type="catalytic activity">
    <reaction evidence="1">
        <text>1D-myo-inositol 1-phosphate + H2O = myo-inositol + phosphate</text>
        <dbReference type="Rhea" id="RHEA:27670"/>
        <dbReference type="ChEBI" id="CHEBI:15377"/>
        <dbReference type="ChEBI" id="CHEBI:17268"/>
        <dbReference type="ChEBI" id="CHEBI:43474"/>
        <dbReference type="ChEBI" id="CHEBI:58433"/>
        <dbReference type="EC" id="3.1.3.25"/>
    </reaction>
    <physiologicalReaction direction="left-to-right" evidence="1">
        <dbReference type="Rhea" id="RHEA:27671"/>
    </physiologicalReaction>
</comment>
<comment type="catalytic activity">
    <reaction evidence="1">
        <text>1D-myo-inositol 2-phosphate + H2O = myo-inositol + phosphate</text>
        <dbReference type="Rhea" id="RHEA:44152"/>
        <dbReference type="ChEBI" id="CHEBI:15377"/>
        <dbReference type="ChEBI" id="CHEBI:17268"/>
        <dbReference type="ChEBI" id="CHEBI:43474"/>
        <dbReference type="ChEBI" id="CHEBI:84142"/>
        <dbReference type="EC" id="3.1.3.25"/>
    </reaction>
    <physiologicalReaction direction="left-to-right" evidence="1">
        <dbReference type="Rhea" id="RHEA:44153"/>
    </physiologicalReaction>
</comment>
<comment type="catalytic activity">
    <reaction evidence="1">
        <text>1D-myo-inositol 3-phosphate + H2O = myo-inositol + phosphate</text>
        <dbReference type="Rhea" id="RHEA:30739"/>
        <dbReference type="ChEBI" id="CHEBI:15377"/>
        <dbReference type="ChEBI" id="CHEBI:17268"/>
        <dbReference type="ChEBI" id="CHEBI:43474"/>
        <dbReference type="ChEBI" id="CHEBI:58401"/>
        <dbReference type="EC" id="3.1.3.25"/>
    </reaction>
    <physiologicalReaction direction="left-to-right" evidence="1">
        <dbReference type="Rhea" id="RHEA:30740"/>
    </physiologicalReaction>
</comment>
<comment type="catalytic activity">
    <reaction evidence="1">
        <text>1D-myo-inositol 4-phosphate + H2O = myo-inositol + phosphate</text>
        <dbReference type="Rhea" id="RHEA:30735"/>
        <dbReference type="ChEBI" id="CHEBI:15377"/>
        <dbReference type="ChEBI" id="CHEBI:17268"/>
        <dbReference type="ChEBI" id="CHEBI:43474"/>
        <dbReference type="ChEBI" id="CHEBI:58469"/>
        <dbReference type="EC" id="3.1.3.25"/>
    </reaction>
    <physiologicalReaction direction="left-to-right" evidence="1">
        <dbReference type="Rhea" id="RHEA:30736"/>
    </physiologicalReaction>
</comment>
<comment type="catalytic activity">
    <reaction evidence="1">
        <text>1D-myo-inositol 5-phosphate + H2O = myo-inositol + phosphate</text>
        <dbReference type="Rhea" id="RHEA:44156"/>
        <dbReference type="ChEBI" id="CHEBI:15377"/>
        <dbReference type="ChEBI" id="CHEBI:17268"/>
        <dbReference type="ChEBI" id="CHEBI:43474"/>
        <dbReference type="ChEBI" id="CHEBI:84141"/>
        <dbReference type="EC" id="3.1.3.25"/>
    </reaction>
    <physiologicalReaction direction="left-to-right" evidence="1">
        <dbReference type="Rhea" id="RHEA:44157"/>
    </physiologicalReaction>
</comment>
<comment type="catalytic activity">
    <reaction evidence="1">
        <text>1D-myo-inositol 6-phosphate + H2O = myo-inositol + phosphate</text>
        <dbReference type="Rhea" id="RHEA:44160"/>
        <dbReference type="ChEBI" id="CHEBI:15377"/>
        <dbReference type="ChEBI" id="CHEBI:17268"/>
        <dbReference type="ChEBI" id="CHEBI:43474"/>
        <dbReference type="ChEBI" id="CHEBI:64841"/>
        <dbReference type="EC" id="3.1.3.25"/>
    </reaction>
    <physiologicalReaction direction="left-to-right" evidence="1">
        <dbReference type="Rhea" id="RHEA:44161"/>
    </physiologicalReaction>
</comment>
<comment type="catalytic activity">
    <reaction evidence="1">
        <text>scyllo-inositol 1-phosphate + H2O = scyllo-inositol + phosphate</text>
        <dbReference type="Rhea" id="RHEA:82131"/>
        <dbReference type="ChEBI" id="CHEBI:10642"/>
        <dbReference type="ChEBI" id="CHEBI:15377"/>
        <dbReference type="ChEBI" id="CHEBI:43474"/>
        <dbReference type="ChEBI" id="CHEBI:232087"/>
    </reaction>
    <physiologicalReaction direction="left-to-right" evidence="1">
        <dbReference type="Rhea" id="RHEA:82132"/>
    </physiologicalReaction>
</comment>
<comment type="catalytic activity">
    <reaction evidence="1">
        <text>alpha-D-galactose 1-phosphate + H2O = D-galactose + phosphate</text>
        <dbReference type="Rhea" id="RHEA:29315"/>
        <dbReference type="ChEBI" id="CHEBI:4139"/>
        <dbReference type="ChEBI" id="CHEBI:15377"/>
        <dbReference type="ChEBI" id="CHEBI:43474"/>
        <dbReference type="ChEBI" id="CHEBI:58336"/>
        <dbReference type="EC" id="3.1.3.94"/>
    </reaction>
    <physiologicalReaction direction="left-to-right" evidence="1">
        <dbReference type="Rhea" id="RHEA:29316"/>
    </physiologicalReaction>
</comment>
<comment type="catalytic activity">
    <reaction evidence="1">
        <text>alpha-D-glucose 1-phosphate + H2O = D-glucose + phosphate</text>
        <dbReference type="Rhea" id="RHEA:19933"/>
        <dbReference type="ChEBI" id="CHEBI:4167"/>
        <dbReference type="ChEBI" id="CHEBI:15377"/>
        <dbReference type="ChEBI" id="CHEBI:43474"/>
        <dbReference type="ChEBI" id="CHEBI:58601"/>
    </reaction>
    <physiologicalReaction direction="left-to-right" evidence="1">
        <dbReference type="Rhea" id="RHEA:19934"/>
    </physiologicalReaction>
</comment>
<comment type="catalytic activity">
    <reaction evidence="1">
        <text>D-glucose 6-phosphate + H2O = D-glucose + phosphate</text>
        <dbReference type="Rhea" id="RHEA:16689"/>
        <dbReference type="ChEBI" id="CHEBI:4167"/>
        <dbReference type="ChEBI" id="CHEBI:15377"/>
        <dbReference type="ChEBI" id="CHEBI:43474"/>
        <dbReference type="ChEBI" id="CHEBI:61548"/>
    </reaction>
    <physiologicalReaction direction="left-to-right" evidence="1">
        <dbReference type="Rhea" id="RHEA:16690"/>
    </physiologicalReaction>
</comment>
<comment type="catalytic activity">
    <reaction evidence="1">
        <text>beta-D-fructose 1-phosphate + H2O = D-fructose + phosphate</text>
        <dbReference type="Rhea" id="RHEA:35603"/>
        <dbReference type="ChEBI" id="CHEBI:15377"/>
        <dbReference type="ChEBI" id="CHEBI:37721"/>
        <dbReference type="ChEBI" id="CHEBI:43474"/>
        <dbReference type="ChEBI" id="CHEBI:138881"/>
    </reaction>
    <physiologicalReaction direction="left-to-right" evidence="1">
        <dbReference type="Rhea" id="RHEA:35604"/>
    </physiologicalReaction>
</comment>
<comment type="catalytic activity">
    <reaction evidence="1">
        <text>glycerol 2-phosphate + H2O = glycerol + phosphate</text>
        <dbReference type="Rhea" id="RHEA:13105"/>
        <dbReference type="ChEBI" id="CHEBI:15377"/>
        <dbReference type="ChEBI" id="CHEBI:17754"/>
        <dbReference type="ChEBI" id="CHEBI:43474"/>
        <dbReference type="ChEBI" id="CHEBI:58083"/>
    </reaction>
    <physiologicalReaction direction="left-to-right" evidence="1">
        <dbReference type="Rhea" id="RHEA:13106"/>
    </physiologicalReaction>
</comment>
<comment type="catalytic activity">
    <reaction evidence="1">
        <text>adenosine 2'-phosphate + H2O = adenosine + phosphate</text>
        <dbReference type="Rhea" id="RHEA:37343"/>
        <dbReference type="ChEBI" id="CHEBI:15377"/>
        <dbReference type="ChEBI" id="CHEBI:16335"/>
        <dbReference type="ChEBI" id="CHEBI:43474"/>
        <dbReference type="ChEBI" id="CHEBI:77740"/>
    </reaction>
    <physiologicalReaction direction="left-to-right" evidence="1">
        <dbReference type="Rhea" id="RHEA:37344"/>
    </physiologicalReaction>
</comment>
<comment type="cofactor">
    <cofactor evidence="5">
        <name>Mg(2+)</name>
        <dbReference type="ChEBI" id="CHEBI:18420"/>
    </cofactor>
</comment>
<comment type="activity regulation">
    <text evidence="1">Inhibited by Li(+), Ca(2+) and Mn(2+), but also by Mg(2+) at concentrations above 3 mM.</text>
</comment>
<comment type="pathway">
    <text>Polyol metabolism; myo-inositol biosynthesis; myo-inositol from D-glucose 6-phosphate: step 2/2.</text>
</comment>
<comment type="subunit">
    <text evidence="4">Homodimer.</text>
</comment>
<comment type="subcellular location">
    <subcellularLocation>
        <location evidence="1">Cytoplasm</location>
    </subcellularLocation>
</comment>
<comment type="tissue specificity">
    <text evidence="3">Mostly expressed in brain, small intestine, testis, kidney, and spleen (at protein level).</text>
</comment>
<comment type="induction">
    <text evidence="2">By lithium Li(+) in hippocamp.</text>
</comment>
<comment type="similarity">
    <text evidence="6">Belongs to the inositol monophosphatase superfamily.</text>
</comment>
<name>IMPA1_MOUSE</name>
<protein>
    <recommendedName>
        <fullName>Inositol monophosphatase 1</fullName>
        <shortName>IMP 1</shortName>
        <shortName>IMPase 1</shortName>
        <ecNumber evidence="1">3.1.3.25</ecNumber>
    </recommendedName>
    <alternativeName>
        <fullName evidence="1">D-galactose 1-phosphate phosphatase</fullName>
        <ecNumber evidence="1">3.1.3.94</ecNumber>
    </alternativeName>
    <alternativeName>
        <fullName>Inositol-1(or 4)-monophosphatase 1</fullName>
    </alternativeName>
    <alternativeName>
        <fullName>Lithium-sensitive myo-inositol monophosphatase A1</fullName>
    </alternativeName>
</protein>
<evidence type="ECO:0000250" key="1">
    <source>
        <dbReference type="UniProtKB" id="P29218"/>
    </source>
</evidence>
<evidence type="ECO:0000269" key="2">
    <source>
    </source>
</evidence>
<evidence type="ECO:0000269" key="3">
    <source>
    </source>
</evidence>
<evidence type="ECO:0000269" key="4">
    <source>
    </source>
</evidence>
<evidence type="ECO:0000303" key="5">
    <source>
    </source>
</evidence>
<evidence type="ECO:0000305" key="6"/>
<evidence type="ECO:0007829" key="7">
    <source>
        <dbReference type="PDB" id="4AS5"/>
    </source>
</evidence>
<proteinExistence type="evidence at protein level"/>
<accession>O55023</accession>
<gene>
    <name type="primary">Impa1</name>
</gene>
<feature type="chain" id="PRO_0000142514" description="Inositol monophosphatase 1">
    <location>
        <begin position="1"/>
        <end position="277"/>
    </location>
</feature>
<feature type="binding site" evidence="4">
    <location>
        <position position="70"/>
    </location>
    <ligand>
        <name>Mg(2+)</name>
        <dbReference type="ChEBI" id="CHEBI:18420"/>
        <label>1</label>
        <note>catalytic</note>
    </ligand>
</feature>
<feature type="binding site" evidence="6">
    <location>
        <position position="70"/>
    </location>
    <ligand>
        <name>substrate</name>
    </ligand>
</feature>
<feature type="binding site" evidence="6">
    <location>
        <begin position="90"/>
        <end position="95"/>
    </location>
    <ligand>
        <name>substrate</name>
    </ligand>
</feature>
<feature type="binding site" evidence="4">
    <location>
        <position position="90"/>
    </location>
    <ligand>
        <name>Mg(2+)</name>
        <dbReference type="ChEBI" id="CHEBI:18420"/>
        <label>1</label>
        <note>catalytic</note>
    </ligand>
</feature>
<feature type="binding site" evidence="4">
    <location>
        <position position="90"/>
    </location>
    <ligand>
        <name>Mg(2+)</name>
        <dbReference type="ChEBI" id="CHEBI:18420"/>
        <label>2</label>
    </ligand>
</feature>
<feature type="binding site" evidence="4">
    <location>
        <position position="92"/>
    </location>
    <ligand>
        <name>Mg(2+)</name>
        <dbReference type="ChEBI" id="CHEBI:18420"/>
        <label>1</label>
        <note>catalytic</note>
    </ligand>
</feature>
<feature type="binding site" evidence="4">
    <location>
        <position position="93"/>
    </location>
    <ligand>
        <name>Mg(2+)</name>
        <dbReference type="ChEBI" id="CHEBI:18420"/>
        <label>2</label>
    </ligand>
</feature>
<feature type="binding site" evidence="1">
    <location>
        <begin position="194"/>
        <end position="196"/>
    </location>
    <ligand>
        <name>substrate</name>
    </ligand>
</feature>
<feature type="binding site" evidence="1">
    <location>
        <position position="213"/>
    </location>
    <ligand>
        <name>substrate</name>
    </ligand>
</feature>
<feature type="binding site" evidence="4">
    <location>
        <position position="220"/>
    </location>
    <ligand>
        <name>Mg(2+)</name>
        <dbReference type="ChEBI" id="CHEBI:18420"/>
        <label>2</label>
    </ligand>
</feature>
<feature type="binding site" evidence="1">
    <location>
        <position position="220"/>
    </location>
    <ligand>
        <name>substrate</name>
    </ligand>
</feature>
<feature type="helix" evidence="7">
    <location>
        <begin position="4"/>
        <end position="26"/>
    </location>
</feature>
<feature type="strand" evidence="7">
    <location>
        <begin position="34"/>
        <end position="38"/>
    </location>
</feature>
<feature type="helix" evidence="7">
    <location>
        <begin position="45"/>
        <end position="61"/>
    </location>
</feature>
<feature type="strand" evidence="7">
    <location>
        <begin position="65"/>
        <end position="69"/>
    </location>
</feature>
<feature type="helix" evidence="7">
    <location>
        <begin position="70"/>
        <end position="74"/>
    </location>
</feature>
<feature type="strand" evidence="7">
    <location>
        <begin position="86"/>
        <end position="93"/>
    </location>
</feature>
<feature type="helix" evidence="7">
    <location>
        <begin position="95"/>
        <end position="100"/>
    </location>
</feature>
<feature type="strand" evidence="7">
    <location>
        <begin position="106"/>
        <end position="113"/>
    </location>
</feature>
<feature type="strand" evidence="7">
    <location>
        <begin position="116"/>
        <end position="124"/>
    </location>
</feature>
<feature type="turn" evidence="7">
    <location>
        <begin position="125"/>
        <end position="128"/>
    </location>
</feature>
<feature type="strand" evidence="7">
    <location>
        <begin position="129"/>
        <end position="134"/>
    </location>
</feature>
<feature type="turn" evidence="7">
    <location>
        <begin position="135"/>
        <end position="137"/>
    </location>
</feature>
<feature type="strand" evidence="7">
    <location>
        <begin position="138"/>
        <end position="141"/>
    </location>
</feature>
<feature type="helix" evidence="7">
    <location>
        <begin position="154"/>
        <end position="156"/>
    </location>
</feature>
<feature type="strand" evidence="7">
    <location>
        <begin position="158"/>
        <end position="160"/>
    </location>
</feature>
<feature type="helix" evidence="7">
    <location>
        <begin position="169"/>
        <end position="183"/>
    </location>
</feature>
<feature type="turn" evidence="7">
    <location>
        <begin position="184"/>
        <end position="186"/>
    </location>
</feature>
<feature type="strand" evidence="7">
    <location>
        <begin position="188"/>
        <end position="192"/>
    </location>
</feature>
<feature type="helix" evidence="7">
    <location>
        <begin position="196"/>
        <end position="204"/>
    </location>
</feature>
<feature type="strand" evidence="7">
    <location>
        <begin position="207"/>
        <end position="215"/>
    </location>
</feature>
<feature type="helix" evidence="7">
    <location>
        <begin position="218"/>
        <end position="230"/>
    </location>
</feature>
<feature type="strand" evidence="7">
    <location>
        <begin position="234"/>
        <end position="236"/>
    </location>
</feature>
<feature type="strand" evidence="7">
    <location>
        <begin position="240"/>
        <end position="242"/>
    </location>
</feature>
<feature type="strand" evidence="7">
    <location>
        <begin position="247"/>
        <end position="254"/>
    </location>
</feature>
<feature type="helix" evidence="7">
    <location>
        <begin position="256"/>
        <end position="265"/>
    </location>
</feature>
<reference key="1">
    <citation type="submission" date="1998-01" db="EMBL/GenBank/DDBJ databases">
        <authorList>
            <person name="Parthasarathy L."/>
            <person name="Parthasarathy R."/>
            <person name="Vadnal R.E."/>
        </authorList>
    </citation>
    <scope>NUCLEOTIDE SEQUENCE [MRNA]</scope>
    <source>
        <tissue>Brain</tissue>
    </source>
</reference>
<reference key="2">
    <citation type="journal article" date="2003" name="Brain Res. Mol. Brain Res.">
        <title>The effect of lithium on expression of genes for inositol biosynthetic enzymes in mouse hippocampus; a comparison with the yeast model.</title>
        <authorList>
            <person name="Shamir A."/>
            <person name="Shaltiel G."/>
            <person name="Greenberg M.L."/>
            <person name="Belmaker R.H."/>
            <person name="Agam G."/>
        </authorList>
    </citation>
    <scope>INDUCTION</scope>
</reference>
<reference key="3">
    <citation type="journal article" date="2007" name="J. Biol. Chem.">
        <title>Spatial expression patterns and biochemical properties distinguish a second myo-inositol monophosphatase IMPA2 from IMPA1.</title>
        <authorList>
            <person name="Ohnishi T."/>
            <person name="Ohba H."/>
            <person name="Seo K.-C."/>
            <person name="Im J."/>
            <person name="Sato Y."/>
            <person name="Iwayama Y."/>
            <person name="Furuichi T."/>
            <person name="Chung S.-K."/>
            <person name="Yoshikawa T."/>
        </authorList>
    </citation>
    <scope>TISSUE SPECIFICITY</scope>
</reference>
<reference key="4">
    <citation type="journal article" date="2010" name="Cell">
        <title>A tissue-specific atlas of mouse protein phosphorylation and expression.</title>
        <authorList>
            <person name="Huttlin E.L."/>
            <person name="Jedrychowski M.P."/>
            <person name="Elias J.E."/>
            <person name="Goswami T."/>
            <person name="Rad R."/>
            <person name="Beausoleil S.A."/>
            <person name="Villen J."/>
            <person name="Haas W."/>
            <person name="Sowa M.E."/>
            <person name="Gygi S.P."/>
        </authorList>
    </citation>
    <scope>IDENTIFICATION BY MASS SPECTROMETRY [LARGE SCALE ANALYSIS]</scope>
    <source>
        <tissue>Brain</tissue>
        <tissue>Brown adipose tissue</tissue>
        <tissue>Heart</tissue>
        <tissue>Kidney</tissue>
        <tissue>Liver</tissue>
        <tissue>Lung</tissue>
        <tissue>Pancreas</tissue>
        <tissue>Spleen</tissue>
        <tissue>Testis</tissue>
    </source>
</reference>
<reference key="5">
    <citation type="journal article" date="2012" name="Acta Crystallogr. F">
        <title>Cloning, expression, purification, crystallization and X-ray analysis of inositol monophosphatase from Mus musculus and Homo sapiens.</title>
        <authorList>
            <person name="Singh N."/>
            <person name="Halliday A.C."/>
            <person name="Knight M."/>
            <person name="Lack N.A."/>
            <person name="Lowe E."/>
            <person name="Churchill G.C."/>
        </authorList>
    </citation>
    <scope>X-RAY CRYSTALLOGRAPHY (2.43 ANGSTROMS) IN COMPLEX WITH MAGNESIUM AND PHOSPHATE</scope>
    <scope>SUBUNIT</scope>
    <scope>COFACTOR</scope>
</reference>
<sequence>MADPWQECMDYAVILARQAGEMIREALKNEMDVMIKSSPADLVTVTDQKVEKMLMSSIKEKYPCHSFIGEESVAAGEKTVFTESPTWFIDPIDGTTNFVHRFPFVAVSIGFLVNKEMEFGIVYSCVEDKMYTGRKGKGAFCNGQKLQVSQQEDITKSLLVTELGSSRKPETLRIVLSNMEKLCSIPIHGIRSVGTAAVNMCLVATGGADAYYEMGIHCWDMAGAGIIVTEAGGVLMDVTGGPFDLMSRRIIAANSITLAKRIAKEIEIIPLQRDDES</sequence>
<organism>
    <name type="scientific">Mus musculus</name>
    <name type="common">Mouse</name>
    <dbReference type="NCBI Taxonomy" id="10090"/>
    <lineage>
        <taxon>Eukaryota</taxon>
        <taxon>Metazoa</taxon>
        <taxon>Chordata</taxon>
        <taxon>Craniata</taxon>
        <taxon>Vertebrata</taxon>
        <taxon>Euteleostomi</taxon>
        <taxon>Mammalia</taxon>
        <taxon>Eutheria</taxon>
        <taxon>Euarchontoglires</taxon>
        <taxon>Glires</taxon>
        <taxon>Rodentia</taxon>
        <taxon>Myomorpha</taxon>
        <taxon>Muroidea</taxon>
        <taxon>Muridae</taxon>
        <taxon>Murinae</taxon>
        <taxon>Mus</taxon>
        <taxon>Mus</taxon>
    </lineage>
</organism>